<dbReference type="EC" id="2.4.2.-" evidence="2 4"/>
<dbReference type="EC" id="2.4.2.22" evidence="2 4"/>
<dbReference type="EMBL" id="X00221">
    <property type="protein sequence ID" value="CAA25040.1"/>
    <property type="molecule type" value="Genomic_DNA"/>
</dbReference>
<dbReference type="EMBL" id="X00222">
    <property type="protein sequence ID" value="CAA25041.1"/>
    <property type="molecule type" value="Genomic_DNA"/>
</dbReference>
<dbReference type="EMBL" id="M13422">
    <property type="protein sequence ID" value="AAA23928.1"/>
    <property type="molecule type" value="Genomic_DNA"/>
</dbReference>
<dbReference type="EMBL" id="M12907">
    <property type="protein sequence ID" value="AAA23932.1"/>
    <property type="molecule type" value="Genomic_DNA"/>
</dbReference>
<dbReference type="EMBL" id="M15035">
    <property type="protein sequence ID" value="AAA23933.1"/>
    <property type="molecule type" value="Genomic_DNA"/>
</dbReference>
<dbReference type="EMBL" id="U70214">
    <property type="protein sequence ID" value="AAB08658.1"/>
    <property type="molecule type" value="Genomic_DNA"/>
</dbReference>
<dbReference type="EMBL" id="U00096">
    <property type="protein sequence ID" value="AAC73342.1"/>
    <property type="molecule type" value="Genomic_DNA"/>
</dbReference>
<dbReference type="EMBL" id="AP009048">
    <property type="protein sequence ID" value="BAA77907.1"/>
    <property type="molecule type" value="Genomic_DNA"/>
</dbReference>
<dbReference type="EMBL" id="M10382">
    <property type="protein sequence ID" value="AAA23931.1"/>
    <property type="molecule type" value="Genomic_DNA"/>
</dbReference>
<dbReference type="PIR" id="A00587">
    <property type="entry name" value="RTECGX"/>
</dbReference>
<dbReference type="RefSeq" id="NP_414773.1">
    <property type="nucleotide sequence ID" value="NC_000913.3"/>
</dbReference>
<dbReference type="RefSeq" id="WP_001291990.1">
    <property type="nucleotide sequence ID" value="NZ_SSZK01000050.1"/>
</dbReference>
<dbReference type="PDB" id="1A95">
    <property type="method" value="X-ray"/>
    <property type="resolution" value="2.00 A"/>
    <property type="chains" value="A/B/C/D=1-152"/>
</dbReference>
<dbReference type="PDB" id="1A96">
    <property type="method" value="X-ray"/>
    <property type="resolution" value="2.00 A"/>
    <property type="chains" value="A/B/C/D=1-152"/>
</dbReference>
<dbReference type="PDB" id="1A97">
    <property type="method" value="X-ray"/>
    <property type="resolution" value="2.60 A"/>
    <property type="chains" value="A/B/C/D=3-150"/>
</dbReference>
<dbReference type="PDB" id="1A98">
    <property type="method" value="X-ray"/>
    <property type="resolution" value="2.25 A"/>
    <property type="chains" value="A/B=1-152"/>
</dbReference>
<dbReference type="PDB" id="1NUL">
    <property type="method" value="X-ray"/>
    <property type="resolution" value="1.80 A"/>
    <property type="chains" value="A/B=1-152"/>
</dbReference>
<dbReference type="PDB" id="4JIT">
    <property type="method" value="X-ray"/>
    <property type="resolution" value="2.80 A"/>
    <property type="chains" value="A/B/C/D=1-152"/>
</dbReference>
<dbReference type="PDB" id="4JLS">
    <property type="method" value="X-ray"/>
    <property type="resolution" value="2.20 A"/>
    <property type="chains" value="A/B/C/D/E/H/I/J=1-152"/>
</dbReference>
<dbReference type="PDBsum" id="1A95"/>
<dbReference type="PDBsum" id="1A96"/>
<dbReference type="PDBsum" id="1A97"/>
<dbReference type="PDBsum" id="1A98"/>
<dbReference type="PDBsum" id="1NUL"/>
<dbReference type="PDBsum" id="4JIT"/>
<dbReference type="PDBsum" id="4JLS"/>
<dbReference type="SMR" id="P0A9M5"/>
<dbReference type="BioGRID" id="4260989">
    <property type="interactions" value="11"/>
</dbReference>
<dbReference type="FunCoup" id="P0A9M5">
    <property type="interactions" value="117"/>
</dbReference>
<dbReference type="IntAct" id="P0A9M5">
    <property type="interactions" value="1"/>
</dbReference>
<dbReference type="STRING" id="511145.b0238"/>
<dbReference type="BindingDB" id="P0A9M5"/>
<dbReference type="ChEMBL" id="CHEMBL3988588"/>
<dbReference type="DrugBank" id="DB03942">
    <property type="generic name" value="Carboxylic PRPP"/>
</dbReference>
<dbReference type="DrugBank" id="DB02377">
    <property type="generic name" value="Guanine"/>
</dbReference>
<dbReference type="DrugBank" id="DB01972">
    <property type="generic name" value="Guanosine-5'-Monophosphate"/>
</dbReference>
<dbReference type="DrugBank" id="DB02134">
    <property type="generic name" value="Xanthine"/>
</dbReference>
<dbReference type="jPOST" id="P0A9M5"/>
<dbReference type="PaxDb" id="511145-b0238"/>
<dbReference type="EnsemblBacteria" id="AAC73342">
    <property type="protein sequence ID" value="AAC73342"/>
    <property type="gene ID" value="b0238"/>
</dbReference>
<dbReference type="GeneID" id="93777155"/>
<dbReference type="GeneID" id="944817"/>
<dbReference type="KEGG" id="ecj:JW0228"/>
<dbReference type="KEGG" id="eco:b0238"/>
<dbReference type="KEGG" id="ecoc:C3026_01130"/>
<dbReference type="KEGG" id="ecoc:C3026_23865"/>
<dbReference type="PATRIC" id="fig|1411691.4.peg.2045"/>
<dbReference type="EchoBASE" id="EB0409"/>
<dbReference type="eggNOG" id="COG2236">
    <property type="taxonomic scope" value="Bacteria"/>
</dbReference>
<dbReference type="HOGENOM" id="CLU_080904_3_0_6"/>
<dbReference type="InParanoid" id="P0A9M5"/>
<dbReference type="OMA" id="FHRDCRA"/>
<dbReference type="OrthoDB" id="9789690at2"/>
<dbReference type="PhylomeDB" id="P0A9M5"/>
<dbReference type="BioCyc" id="EcoCyc:GPT-MONOMER"/>
<dbReference type="BioCyc" id="MetaCyc:GPT-MONOMER"/>
<dbReference type="BRENDA" id="2.4.2.22">
    <property type="organism ID" value="2026"/>
</dbReference>
<dbReference type="SABIO-RK" id="P0A9M5"/>
<dbReference type="UniPathway" id="UPA00602">
    <property type="reaction ID" value="UER00658"/>
</dbReference>
<dbReference type="UniPathway" id="UPA00909">
    <property type="reaction ID" value="UER00887"/>
</dbReference>
<dbReference type="EvolutionaryTrace" id="P0A9M5"/>
<dbReference type="PRO" id="PR:P0A9M5"/>
<dbReference type="Proteomes" id="UP000000625">
    <property type="component" value="Chromosome"/>
</dbReference>
<dbReference type="GO" id="GO:0005829">
    <property type="term" value="C:cytosol"/>
    <property type="evidence" value="ECO:0000314"/>
    <property type="project" value="EcoCyc"/>
</dbReference>
<dbReference type="GO" id="GO:0005886">
    <property type="term" value="C:plasma membrane"/>
    <property type="evidence" value="ECO:0007669"/>
    <property type="project" value="UniProtKB-SubCell"/>
</dbReference>
<dbReference type="GO" id="GO:0032991">
    <property type="term" value="C:protein-containing complex"/>
    <property type="evidence" value="ECO:0000314"/>
    <property type="project" value="EcoCyc"/>
</dbReference>
<dbReference type="GO" id="GO:0052657">
    <property type="term" value="F:guanine phosphoribosyltransferase activity"/>
    <property type="evidence" value="ECO:0007669"/>
    <property type="project" value="RHEA"/>
</dbReference>
<dbReference type="GO" id="GO:0097216">
    <property type="term" value="F:guanosine tetraphosphate binding"/>
    <property type="evidence" value="ECO:0000314"/>
    <property type="project" value="EcoCyc"/>
</dbReference>
<dbReference type="GO" id="GO:0004422">
    <property type="term" value="F:hypoxanthine phosphoribosyltransferase activity"/>
    <property type="evidence" value="ECO:0000314"/>
    <property type="project" value="EcoCyc"/>
</dbReference>
<dbReference type="GO" id="GO:0042802">
    <property type="term" value="F:identical protein binding"/>
    <property type="evidence" value="ECO:0000353"/>
    <property type="project" value="EcoCyc"/>
</dbReference>
<dbReference type="GO" id="GO:0000287">
    <property type="term" value="F:magnesium ion binding"/>
    <property type="evidence" value="ECO:0000314"/>
    <property type="project" value="EcoCyc"/>
</dbReference>
<dbReference type="GO" id="GO:0000310">
    <property type="term" value="F:xanthine phosphoribosyltransferase activity"/>
    <property type="evidence" value="ECO:0000314"/>
    <property type="project" value="EcoCyc"/>
</dbReference>
<dbReference type="GO" id="GO:0032263">
    <property type="term" value="P:GMP salvage"/>
    <property type="evidence" value="ECO:0000315"/>
    <property type="project" value="EcoCyc"/>
</dbReference>
<dbReference type="GO" id="GO:0032264">
    <property type="term" value="P:IMP salvage"/>
    <property type="evidence" value="ECO:0000314"/>
    <property type="project" value="EcoCyc"/>
</dbReference>
<dbReference type="GO" id="GO:0051289">
    <property type="term" value="P:protein homotetramerization"/>
    <property type="evidence" value="ECO:0000314"/>
    <property type="project" value="EcoCyc"/>
</dbReference>
<dbReference type="GO" id="GO:0006166">
    <property type="term" value="P:purine ribonucleoside salvage"/>
    <property type="evidence" value="ECO:0007669"/>
    <property type="project" value="UniProtKB-KW"/>
</dbReference>
<dbReference type="GO" id="GO:0032265">
    <property type="term" value="P:XMP salvage"/>
    <property type="evidence" value="ECO:0000315"/>
    <property type="project" value="EcoCyc"/>
</dbReference>
<dbReference type="CDD" id="cd06223">
    <property type="entry name" value="PRTases_typeI"/>
    <property type="match status" value="1"/>
</dbReference>
<dbReference type="FunFam" id="3.40.50.2020:FF:000009">
    <property type="entry name" value="Xanthine phosphoribosyltransferase"/>
    <property type="match status" value="1"/>
</dbReference>
<dbReference type="Gene3D" id="3.40.50.2020">
    <property type="match status" value="1"/>
</dbReference>
<dbReference type="HAMAP" id="MF_01903">
    <property type="entry name" value="XGPRT"/>
    <property type="match status" value="1"/>
</dbReference>
<dbReference type="InterPro" id="IPR000836">
    <property type="entry name" value="PRibTrfase_dom"/>
</dbReference>
<dbReference type="InterPro" id="IPR029057">
    <property type="entry name" value="PRTase-like"/>
</dbReference>
<dbReference type="InterPro" id="IPR023747">
    <property type="entry name" value="Xanthine_Guanine_PRibTrfase"/>
</dbReference>
<dbReference type="NCBIfam" id="NF006613">
    <property type="entry name" value="PRK09177.1"/>
    <property type="match status" value="1"/>
</dbReference>
<dbReference type="PANTHER" id="PTHR39563">
    <property type="entry name" value="XANTHINE PHOSPHORIBOSYLTRANSFERASE"/>
    <property type="match status" value="1"/>
</dbReference>
<dbReference type="PANTHER" id="PTHR39563:SF1">
    <property type="entry name" value="XANTHINE-GUANINE PHOSPHORIBOSYLTRANSFERASE"/>
    <property type="match status" value="1"/>
</dbReference>
<dbReference type="Pfam" id="PF00156">
    <property type="entry name" value="Pribosyltran"/>
    <property type="match status" value="1"/>
</dbReference>
<dbReference type="SUPFAM" id="SSF53271">
    <property type="entry name" value="PRTase-like"/>
    <property type="match status" value="1"/>
</dbReference>
<dbReference type="PROSITE" id="PS00103">
    <property type="entry name" value="PUR_PYR_PR_TRANSFER"/>
    <property type="match status" value="1"/>
</dbReference>
<protein>
    <recommendedName>
        <fullName evidence="6 7 8">Xanthine-guanine phosphoribosyltransferase</fullName>
        <shortName evidence="6">XGPRT</shortName>
        <ecNumber evidence="2 4">2.4.2.-</ecNumber>
        <ecNumber evidence="2 4">2.4.2.22</ecNumber>
    </recommendedName>
    <alternativeName>
        <fullName evidence="9">Xanthine phosphoribosyltransferase</fullName>
    </alternativeName>
</protein>
<keyword id="KW-0002">3D-structure</keyword>
<keyword id="KW-0997">Cell inner membrane</keyword>
<keyword id="KW-1003">Cell membrane</keyword>
<keyword id="KW-0903">Direct protein sequencing</keyword>
<keyword id="KW-0328">Glycosyltransferase</keyword>
<keyword id="KW-0460">Magnesium</keyword>
<keyword id="KW-0472">Membrane</keyword>
<keyword id="KW-0479">Metal-binding</keyword>
<keyword id="KW-0660">Purine salvage</keyword>
<keyword id="KW-1185">Reference proteome</keyword>
<keyword id="KW-0808">Transferase</keyword>
<name>XGPT_ECOLI</name>
<comment type="function">
    <text evidence="2 4">Purine salvage pathway enzyme that catalyzes the transfer of the ribosyl-5-phosphate group from 5-phospho-alpha-D-ribose 1-diphosphate (PRPP) to the N9 position of the 6-oxopurines guanine and xanthine to form the corresponding ribonucleotides GMP (guanosine 5'-monophosphate) and XMP (xanthosine 5'-monophosphate), with the release of PPi. To a lesser extent, also acts on hypoxanthine (PubMed:3886014, PubMed:9100006). Does not ribophosphorylate adenine (PubMed:3886014).</text>
</comment>
<comment type="catalytic activity">
    <reaction evidence="2 4">
        <text>GMP + diphosphate = guanine + 5-phospho-alpha-D-ribose 1-diphosphate</text>
        <dbReference type="Rhea" id="RHEA:25424"/>
        <dbReference type="ChEBI" id="CHEBI:16235"/>
        <dbReference type="ChEBI" id="CHEBI:33019"/>
        <dbReference type="ChEBI" id="CHEBI:58017"/>
        <dbReference type="ChEBI" id="CHEBI:58115"/>
    </reaction>
    <physiologicalReaction direction="right-to-left" evidence="11">
        <dbReference type="Rhea" id="RHEA:25426"/>
    </physiologicalReaction>
</comment>
<comment type="catalytic activity">
    <reaction evidence="2 4">
        <text>XMP + diphosphate = xanthine + 5-phospho-alpha-D-ribose 1-diphosphate</text>
        <dbReference type="Rhea" id="RHEA:10800"/>
        <dbReference type="ChEBI" id="CHEBI:17712"/>
        <dbReference type="ChEBI" id="CHEBI:33019"/>
        <dbReference type="ChEBI" id="CHEBI:57464"/>
        <dbReference type="ChEBI" id="CHEBI:58017"/>
        <dbReference type="EC" id="2.4.2.22"/>
    </reaction>
    <physiologicalReaction direction="right-to-left" evidence="11">
        <dbReference type="Rhea" id="RHEA:10802"/>
    </physiologicalReaction>
</comment>
<comment type="catalytic activity">
    <reaction evidence="2 4">
        <text>IMP + diphosphate = hypoxanthine + 5-phospho-alpha-D-ribose 1-diphosphate</text>
        <dbReference type="Rhea" id="RHEA:17973"/>
        <dbReference type="ChEBI" id="CHEBI:17368"/>
        <dbReference type="ChEBI" id="CHEBI:33019"/>
        <dbReference type="ChEBI" id="CHEBI:58017"/>
        <dbReference type="ChEBI" id="CHEBI:58053"/>
    </reaction>
    <physiologicalReaction direction="right-to-left" evidence="11">
        <dbReference type="Rhea" id="RHEA:17975"/>
    </physiologicalReaction>
</comment>
<comment type="cofactor">
    <cofactor evidence="4">
        <name>Mg(2+)</name>
        <dbReference type="ChEBI" id="CHEBI:18420"/>
    </cofactor>
</comment>
<comment type="activity regulation">
    <text evidence="1 2">Inhibited by thioguanine, GMP and, to a lesser extent, by thioxanthine, azaxanthine and azaguanine (PubMed:3886014). Highly inhibited by nucleoside phosphonates, which are product analogs (PubMed:23927482).</text>
</comment>
<comment type="biophysicochemical properties">
    <kinetics>
        <KM evidence="4">4.3 uM for guanine (at pH 8.5)</KM>
        <KM evidence="4">30.5 uM for xanthine (at pH 8.5)</KM>
        <KM evidence="4">90.8 uM for hypoxanthine (at pH 8.5)</KM>
        <KM evidence="4">139 uM for 5-phospho-alpha-D-ribose 1-diphosphate (at pH 8.5)</KM>
        <KM evidence="2">2.5 uM for guanine</KM>
        <KM evidence="2">42 uM for xanthine</KM>
        <KM evidence="2">182 uM for hypoxanthine</KM>
        <KM evidence="2">38.5 uM for 5-phospho-alpha-D-ribose 1-diphosphate (with guanine as cosubstrate)</KM>
        <KM evidence="2">100 uM for 5-phospho-alpha-D-ribose 1-diphosphate (with xanthine as cosubstrate)</KM>
        <text evidence="4">kcat is 112.0 sec(-1) with guanine as substrate. kcat is 150.1 sec(-1) with xanthine as substrate. kcat is 54.8 sec(-1) with hypoxanthine as substrate (at pH 8.5).</text>
    </kinetics>
</comment>
<comment type="pathway">
    <text evidence="11">Purine metabolism; GMP biosynthesis via salvage pathway; GMP from guanine: step 1/1.</text>
</comment>
<comment type="pathway">
    <text evidence="11">Purine metabolism; XMP biosynthesis via salvage pathway; XMP from xanthine: step 1/1.</text>
</comment>
<comment type="subunit">
    <text evidence="4 5">Homotetramer.</text>
</comment>
<comment type="subcellular location">
    <subcellularLocation>
        <location evidence="10">Cell inner membrane</location>
        <topology evidence="10">Peripheral membrane protein</topology>
    </subcellularLocation>
</comment>
<comment type="miscellaneous">
    <text evidence="11">E.coli cells express two distinct 6-oxopurine PRTases, with very different specificities for hypoxanthine, guanine, and xanthine. Salvage enzymes allow a more energy efficient synthesis of purine nucleoside monophosphates compared with the de novo pathway. The kinetic analysis suggests that E.coli HPRT is mainly responsible for the synthesis of IMP and that XGPRT primarily salvages guanine and xanthine.</text>
</comment>
<comment type="similarity">
    <text evidence="10">Belongs to the purine/pyrimidine phosphoribosyltransferase family. XGPT subfamily.</text>
</comment>
<reference key="1">
    <citation type="journal article" date="1983" name="Nucleic Acids Res.">
        <title>Nucleotide sequence of the Escherichia coli xanthine-guanine phosphoribosyl transferase gene.</title>
        <authorList>
            <person name="Pratt D."/>
            <person name="Subramani S."/>
        </authorList>
    </citation>
    <scope>NUCLEOTIDE SEQUENCE [GENOMIC DNA]</scope>
</reference>
<reference key="2">
    <citation type="journal article" date="1983" name="Nucleic Acids Res.">
        <title>Nucleotide sequence of the xanthine guanine phosphoribosyl transferase gene of E. coli.</title>
        <authorList>
            <person name="Richardson K.K."/>
            <person name="Fostel J."/>
            <person name="Skopek T.R."/>
        </authorList>
    </citation>
    <scope>NUCLEOTIDE SEQUENCE [GENOMIC DNA]</scope>
</reference>
<reference key="3">
    <citation type="journal article" date="1984" name="Gene">
        <title>Structural and functional organization of the gpt gene region of Escherichia coli.</title>
        <authorList>
            <person name="Nueesch J."/>
            <person name="Schuemperli D."/>
        </authorList>
    </citation>
    <scope>NUCLEOTIDE SEQUENCE [GENOMIC DNA]</scope>
</reference>
<reference key="4">
    <citation type="journal article" date="1984" name="Gene">
        <title>Nucleotide sequence and analysis of deletion mutants of the Escherichia coli gpt gene in plasmid pSV2 gpt.</title>
        <authorList>
            <person name="Jagadeeswaran P."/>
            <person name="Ashman C.R."/>
            <person name="Roberts S."/>
            <person name="Langenberg J."/>
        </authorList>
    </citation>
    <scope>NUCLEOTIDE SEQUENCE [GENOMIC DNA]</scope>
</reference>
<reference key="5">
    <citation type="journal article" date="1987" name="Proc. Natl. Acad. Sci. U.S.A.">
        <title>DNA base changes and alkylation following in vivo exposure of Escherichia coli to N-methyl-N-nitrosourea or N-ethyl-N-nitrosourea.</title>
        <authorList>
            <person name="Richardson K.K."/>
            <person name="Richardson F.C."/>
            <person name="Crosby R.M."/>
            <person name="Swenberg J.A."/>
            <person name="Skopek T.R."/>
        </authorList>
    </citation>
    <scope>NUCLEOTIDE SEQUENCE [GENOMIC DNA]</scope>
</reference>
<reference key="6">
    <citation type="submission" date="1996-02" db="EMBL/GenBank/DDBJ databases">
        <title>Systematic sequencing of the Escherichia coli genome: analysis of the 4.0 - 6.0 min (189,987 - 281,416bp) region.</title>
        <authorList>
            <person name="Takemoto K."/>
            <person name="Mori H."/>
            <person name="Murayama N."/>
            <person name="Kataoka K."/>
            <person name="Yano M."/>
            <person name="Itoh T."/>
            <person name="Yamamoto Y."/>
            <person name="Inokuchi H."/>
            <person name="Miki T."/>
            <person name="Hatada E."/>
            <person name="Fukuda R."/>
            <person name="Ichihara S."/>
            <person name="Mizuno T."/>
            <person name="Makino K."/>
            <person name="Nakata A."/>
            <person name="Yura T."/>
            <person name="Sampei G."/>
            <person name="Mizobuchi K."/>
        </authorList>
    </citation>
    <scope>NUCLEOTIDE SEQUENCE [LARGE SCALE GENOMIC DNA]</scope>
    <source>
        <strain>K12 / W3110 / ATCC 27325 / DSM 5911</strain>
    </source>
</reference>
<reference key="7">
    <citation type="submission" date="1997-01" db="EMBL/GenBank/DDBJ databases">
        <title>Sequence of minutes 4-25 of Escherichia coli.</title>
        <authorList>
            <person name="Chung E."/>
            <person name="Allen E."/>
            <person name="Araujo R."/>
            <person name="Aparicio A.M."/>
            <person name="Davis K."/>
            <person name="Duncan M."/>
            <person name="Federspiel N."/>
            <person name="Hyman R."/>
            <person name="Kalman S."/>
            <person name="Komp C."/>
            <person name="Kurdi O."/>
            <person name="Lew H."/>
            <person name="Lin D."/>
            <person name="Namath A."/>
            <person name="Oefner P."/>
            <person name="Roberts D."/>
            <person name="Schramm S."/>
            <person name="Davis R.W."/>
        </authorList>
    </citation>
    <scope>NUCLEOTIDE SEQUENCE [LARGE SCALE GENOMIC DNA]</scope>
    <source>
        <strain>K12 / MG1655 / ATCC 47076</strain>
    </source>
</reference>
<reference key="8">
    <citation type="journal article" date="1997" name="Science">
        <title>The complete genome sequence of Escherichia coli K-12.</title>
        <authorList>
            <person name="Blattner F.R."/>
            <person name="Plunkett G. III"/>
            <person name="Bloch C.A."/>
            <person name="Perna N.T."/>
            <person name="Burland V."/>
            <person name="Riley M."/>
            <person name="Collado-Vides J."/>
            <person name="Glasner J.D."/>
            <person name="Rode C.K."/>
            <person name="Mayhew G.F."/>
            <person name="Gregor J."/>
            <person name="Davis N.W."/>
            <person name="Kirkpatrick H.A."/>
            <person name="Goeden M.A."/>
            <person name="Rose D.J."/>
            <person name="Mau B."/>
            <person name="Shao Y."/>
        </authorList>
    </citation>
    <scope>NUCLEOTIDE SEQUENCE [LARGE SCALE GENOMIC DNA]</scope>
    <source>
        <strain>K12 / MG1655 / ATCC 47076</strain>
    </source>
</reference>
<reference key="9">
    <citation type="journal article" date="2006" name="Mol. Syst. Biol.">
        <title>Highly accurate genome sequences of Escherichia coli K-12 strains MG1655 and W3110.</title>
        <authorList>
            <person name="Hayashi K."/>
            <person name="Morooka N."/>
            <person name="Yamamoto Y."/>
            <person name="Fujita K."/>
            <person name="Isono K."/>
            <person name="Choi S."/>
            <person name="Ohtsubo E."/>
            <person name="Baba T."/>
            <person name="Wanner B.L."/>
            <person name="Mori H."/>
            <person name="Horiuchi T."/>
        </authorList>
    </citation>
    <scope>NUCLEOTIDE SEQUENCE [LARGE SCALE GENOMIC DNA]</scope>
    <source>
        <strain>K12 / W3110 / ATCC 27325 / DSM 5911</strain>
    </source>
</reference>
<reference key="10">
    <citation type="journal article" date="1981" name="Mol. Cell. Biol.">
        <title>Factors governing the expression of a bacterial gene in mammalian cells.</title>
        <authorList>
            <person name="Mulligan R.C."/>
            <person name="Berg P."/>
        </authorList>
    </citation>
    <scope>NUCLEOTIDE SEQUENCE [GENOMIC DNA] OF 1-49</scope>
</reference>
<reference evidence="17" key="11">
    <citation type="journal article" date="1997" name="Biochemistry">
        <title>Crystal structure of Escherichia coli xanthine phosphoribosyltransferase.</title>
        <authorList>
            <person name="Vos S."/>
            <person name="de Jersey J."/>
            <person name="Martin J.L."/>
        </authorList>
    </citation>
    <scope>PROTEIN SEQUENCE OF 66-76</scope>
    <scope>X-RAY CRYSTALLOGRAPHY (1.8 ANGSTROMS) OF MUTANT ALA-59 IN COMPLEX WITH MAGNESIUM</scope>
    <scope>COFACTOR</scope>
    <scope>FUNCTION</scope>
    <scope>CATALYTIC ACTIVITY</scope>
    <scope>BIOPHYSICOCHEMICAL PROPERTIES</scope>
    <scope>SUBSTRATE SPECIFICITY</scope>
    <scope>SUBUNIT</scope>
    <scope>PATHWAY</scope>
</reference>
<reference key="12">
    <citation type="journal article" date="1985" name="Biochim. Biophys. Acta">
        <title>Purification and characterization of Escherichia coli xanthine-guanine phosphoribosyltransferase produced by plasmid pSV2gpt.</title>
        <authorList>
            <person name="Deo S.S."/>
            <person name="Tseng W.C."/>
            <person name="Saini R."/>
            <person name="Coles R.S."/>
            <person name="Athwal R.S."/>
        </authorList>
    </citation>
    <scope>FUNCTION</scope>
    <scope>CATALYTIC ACTIVITY</scope>
    <scope>BIOPHYSICOCHEMICAL PROPERTIES</scope>
    <scope>SUBSTRATE SPECIFICITY</scope>
    <scope>ACTIVITY REGULATION</scope>
</reference>
<reference key="13">
    <citation type="journal article" date="1996" name="J. Struct. Biol.">
        <title>Crystallization and preliminary X-ray crystallographic studies of Escherichia coli xanthine phosphoribosyltransferase.</title>
        <authorList>
            <person name="Vos S."/>
            <person name="de Jersey J."/>
            <person name="Martin J.L."/>
        </authorList>
    </citation>
    <scope>MUTAGENESIS OF CYS-59</scope>
    <scope>CRYSTALLIZATION OF WILD-TYPE AND OF MUTANT ALA-59</scope>
</reference>
<reference evidence="13 14 15 16" key="14">
    <citation type="journal article" date="1998" name="J. Mol. Biol.">
        <title>Structures of free and complexed forms of Escherichia coli xanthine-guanine phosphoribosyltransferase.</title>
        <authorList>
            <person name="Vos S."/>
            <person name="Parry R.J."/>
            <person name="Burns M.R."/>
            <person name="de Jersey J."/>
            <person name="Martin J.L."/>
        </authorList>
    </citation>
    <scope>X-RAY CRYSTALLOGRAPHY (2.25 ANGSTROMS) OF MUTANT ALA-59 AND WILD-TYPE IN COMPLEXES WITH GUANINE; XANTHINE; GMP; 5-PHOSPHO-ALPHA-D-RIBOSE-1-DIPHOSPHATE ANALOG AND MAGNESIUM</scope>
    <scope>SUBUNIT</scope>
</reference>
<reference evidence="18 19" key="15">
    <citation type="journal article" date="2013" name="J. Med. Chem.">
        <title>Inhibition of the Escherichia coli 6-oxopurine phosphoribosyltransferases by nucleoside phosphonates: potential for new antibacterial agents.</title>
        <authorList>
            <person name="Keough D.T."/>
            <person name="Hockova D."/>
            <person name="Rejman D."/>
            <person name="Spacek P."/>
            <person name="Vrbkova S."/>
            <person name="Krecmerova M."/>
            <person name="Eng W.S."/>
            <person name="Jans H."/>
            <person name="West N.P."/>
            <person name="Naesens L.M."/>
            <person name="de Jersey J."/>
            <person name="Guddat L.W."/>
        </authorList>
    </citation>
    <scope>X-RAY CRYSTALLOGRAPHY (2.2 ANGSTROMS) IN COMPLEXES WITH NUCLEOSIDE PHOSPHONATE INHIBITORS</scope>
    <scope>ACTIVITY REGULATION</scope>
    <scope>MUTAGENESIS OF 65-HIS--GLU-70</scope>
</reference>
<gene>
    <name type="primary">gpt</name>
    <name type="synonym">gpp</name>
    <name type="synonym">gxu</name>
    <name type="ordered locus">b0238</name>
    <name type="ordered locus">JW0228</name>
</gene>
<sequence length="152" mass="16971">MSEKYIVTWDMLQIHARKLASRLMPSEQWKGIIAVSRGGLVPGALLARELGIRHVDTVCISSYDHDNQRELKVLKRAEGDGEGFIVIDDLVDTGGTAVAIREMYPKAHFVTIFAKPAGRPLVDDYVVDIPQDTWIEQPWDMGVVFVPPISGR</sequence>
<proteinExistence type="evidence at protein level"/>
<accession>P0A9M5</accession>
<accession>P00501</accession>
<organism>
    <name type="scientific">Escherichia coli (strain K12)</name>
    <dbReference type="NCBI Taxonomy" id="83333"/>
    <lineage>
        <taxon>Bacteria</taxon>
        <taxon>Pseudomonadati</taxon>
        <taxon>Pseudomonadota</taxon>
        <taxon>Gammaproteobacteria</taxon>
        <taxon>Enterobacterales</taxon>
        <taxon>Enterobacteriaceae</taxon>
        <taxon>Escherichia</taxon>
    </lineage>
</organism>
<evidence type="ECO:0000269" key="1">
    <source>
    </source>
</evidence>
<evidence type="ECO:0000269" key="2">
    <source>
    </source>
</evidence>
<evidence type="ECO:0000269" key="3">
    <source>
    </source>
</evidence>
<evidence type="ECO:0000269" key="4">
    <source>
    </source>
</evidence>
<evidence type="ECO:0000269" key="5">
    <source>
    </source>
</evidence>
<evidence type="ECO:0000303" key="6">
    <source>
    </source>
</evidence>
<evidence type="ECO:0000303" key="7">
    <source>
    </source>
</evidence>
<evidence type="ECO:0000303" key="8">
    <source>
    </source>
</evidence>
<evidence type="ECO:0000303" key="9">
    <source>
    </source>
</evidence>
<evidence type="ECO:0000305" key="10"/>
<evidence type="ECO:0000305" key="11">
    <source>
    </source>
</evidence>
<evidence type="ECO:0000305" key="12">
    <source>
    </source>
</evidence>
<evidence type="ECO:0007744" key="13">
    <source>
        <dbReference type="PDB" id="1A95"/>
    </source>
</evidence>
<evidence type="ECO:0007744" key="14">
    <source>
        <dbReference type="PDB" id="1A96"/>
    </source>
</evidence>
<evidence type="ECO:0007744" key="15">
    <source>
        <dbReference type="PDB" id="1A97"/>
    </source>
</evidence>
<evidence type="ECO:0007744" key="16">
    <source>
        <dbReference type="PDB" id="1A98"/>
    </source>
</evidence>
<evidence type="ECO:0007744" key="17">
    <source>
        <dbReference type="PDB" id="1NUL"/>
    </source>
</evidence>
<evidence type="ECO:0007744" key="18">
    <source>
        <dbReference type="PDB" id="4JIT"/>
    </source>
</evidence>
<evidence type="ECO:0007744" key="19">
    <source>
        <dbReference type="PDB" id="4JLS"/>
    </source>
</evidence>
<evidence type="ECO:0007829" key="20">
    <source>
        <dbReference type="PDB" id="1A95"/>
    </source>
</evidence>
<evidence type="ECO:0007829" key="21">
    <source>
        <dbReference type="PDB" id="1A96"/>
    </source>
</evidence>
<evidence type="ECO:0007829" key="22">
    <source>
        <dbReference type="PDB" id="1NUL"/>
    </source>
</evidence>
<feature type="chain" id="PRO_0000139666" description="Xanthine-guanine phosphoribosyltransferase">
    <location>
        <begin position="1"/>
        <end position="152"/>
    </location>
</feature>
<feature type="binding site" evidence="12 13">
    <location>
        <begin position="37"/>
        <end position="38"/>
    </location>
    <ligand>
        <name>5-phospho-alpha-D-ribose 1-diphosphate</name>
        <dbReference type="ChEBI" id="CHEBI:58017"/>
    </ligand>
</feature>
<feature type="binding site" evidence="12 13">
    <location>
        <position position="69"/>
    </location>
    <ligand>
        <name>5-phospho-alpha-D-ribose 1-diphosphate</name>
        <dbReference type="ChEBI" id="CHEBI:58017"/>
    </ligand>
</feature>
<feature type="binding site" evidence="5 15">
    <location>
        <position position="69"/>
    </location>
    <ligand>
        <name>GMP</name>
        <dbReference type="ChEBI" id="CHEBI:58115"/>
    </ligand>
</feature>
<feature type="binding site" evidence="12 13">
    <location>
        <begin position="88"/>
        <end position="96"/>
    </location>
    <ligand>
        <name>5-phospho-alpha-D-ribose 1-diphosphate</name>
        <dbReference type="ChEBI" id="CHEBI:58017"/>
    </ligand>
</feature>
<feature type="binding site" evidence="4">
    <location>
        <position position="89"/>
    </location>
    <ligand>
        <name>Mg(2+)</name>
        <dbReference type="ChEBI" id="CHEBI:18420"/>
    </ligand>
</feature>
<feature type="binding site" evidence="5 15">
    <location>
        <begin position="92"/>
        <end position="96"/>
    </location>
    <ligand>
        <name>GMP</name>
        <dbReference type="ChEBI" id="CHEBI:58115"/>
    </ligand>
</feature>
<feature type="binding site" evidence="5 13">
    <location>
        <position position="92"/>
    </location>
    <ligand>
        <name>guanine</name>
        <dbReference type="ChEBI" id="CHEBI:16235"/>
    </ligand>
</feature>
<feature type="binding site" evidence="5 14">
    <location>
        <position position="92"/>
    </location>
    <ligand>
        <name>xanthine</name>
        <dbReference type="ChEBI" id="CHEBI:17712"/>
    </ligand>
</feature>
<feature type="binding site" evidence="5 15">
    <location>
        <begin position="134"/>
        <end position="135"/>
    </location>
    <ligand>
        <name>GMP</name>
        <dbReference type="ChEBI" id="CHEBI:58115"/>
    </ligand>
</feature>
<feature type="binding site" evidence="5 13">
    <location>
        <position position="135"/>
    </location>
    <ligand>
        <name>guanine</name>
        <dbReference type="ChEBI" id="CHEBI:16235"/>
    </ligand>
</feature>
<feature type="binding site" evidence="5 14">
    <location>
        <position position="135"/>
    </location>
    <ligand>
        <name>xanthine</name>
        <dbReference type="ChEBI" id="CHEBI:17712"/>
    </ligand>
</feature>
<feature type="mutagenesis site" description="No effect on catalytic activity; increased stability." evidence="3">
    <original>C</original>
    <variation>A</variation>
    <location>
        <position position="59"/>
    </location>
</feature>
<feature type="mutagenesis site" description="No effect on affinity for xanthine and guanine substrates. However, the catalytic activity is highly reduced (200-fold when guanine is used as substrate) and the inhibition by GMP is also affected." evidence="1">
    <original>HDNQRE</original>
    <variation>AAAAAA</variation>
    <location>
        <begin position="65"/>
        <end position="70"/>
    </location>
</feature>
<feature type="sequence conflict" description="In Ref. 5; AAA23933." evidence="10" ref="5">
    <original>V</original>
    <variation>G</variation>
    <location>
        <position position="122"/>
    </location>
</feature>
<feature type="strand" evidence="22">
    <location>
        <begin position="4"/>
        <end position="6"/>
    </location>
</feature>
<feature type="helix" evidence="22">
    <location>
        <begin position="9"/>
        <end position="23"/>
    </location>
</feature>
<feature type="helix" evidence="22">
    <location>
        <begin position="26"/>
        <end position="28"/>
    </location>
</feature>
<feature type="strand" evidence="22">
    <location>
        <begin position="30"/>
        <end position="36"/>
    </location>
</feature>
<feature type="turn" evidence="22">
    <location>
        <begin position="37"/>
        <end position="39"/>
    </location>
</feature>
<feature type="helix" evidence="22">
    <location>
        <begin position="40"/>
        <end position="50"/>
    </location>
</feature>
<feature type="strand" evidence="22">
    <location>
        <begin position="55"/>
        <end position="61"/>
    </location>
</feature>
<feature type="strand" evidence="22">
    <location>
        <begin position="72"/>
        <end position="75"/>
    </location>
</feature>
<feature type="strand" evidence="21">
    <location>
        <begin position="78"/>
        <end position="80"/>
    </location>
</feature>
<feature type="strand" evidence="22">
    <location>
        <begin position="84"/>
        <end position="91"/>
    </location>
</feature>
<feature type="helix" evidence="22">
    <location>
        <begin position="97"/>
        <end position="103"/>
    </location>
</feature>
<feature type="strand" evidence="22">
    <location>
        <begin position="107"/>
        <end position="114"/>
    </location>
</feature>
<feature type="helix" evidence="22">
    <location>
        <begin position="116"/>
        <end position="121"/>
    </location>
</feature>
<feature type="strand" evidence="22">
    <location>
        <begin position="123"/>
        <end position="128"/>
    </location>
</feature>
<feature type="strand" evidence="22">
    <location>
        <begin position="134"/>
        <end position="136"/>
    </location>
</feature>
<feature type="helix" evidence="22">
    <location>
        <begin position="138"/>
        <end position="140"/>
    </location>
</feature>
<feature type="strand" evidence="20">
    <location>
        <begin position="141"/>
        <end position="145"/>
    </location>
</feature>